<feature type="signal peptide" evidence="2">
    <location>
        <begin position="1"/>
        <end position="19"/>
    </location>
</feature>
<feature type="propeptide" id="PRO_0000245016" description="Removed for receptor activation" evidence="1">
    <location>
        <begin position="20"/>
        <end position="38"/>
    </location>
</feature>
<feature type="chain" id="PRO_0000245017" description="Proteinase-activated receptor 3">
    <location>
        <begin position="39"/>
        <end position="377"/>
    </location>
</feature>
<feature type="topological domain" description="Extracellular" evidence="2">
    <location>
        <begin position="39"/>
        <end position="94"/>
    </location>
</feature>
<feature type="transmembrane region" description="Helical; Name=1" evidence="2">
    <location>
        <begin position="95"/>
        <end position="120"/>
    </location>
</feature>
<feature type="topological domain" description="Cytoplasmic" evidence="2">
    <location>
        <begin position="121"/>
        <end position="127"/>
    </location>
</feature>
<feature type="transmembrane region" description="Helical; Name=2" evidence="2">
    <location>
        <begin position="128"/>
        <end position="147"/>
    </location>
</feature>
<feature type="topological domain" description="Extracellular" evidence="2">
    <location>
        <begin position="148"/>
        <end position="166"/>
    </location>
</feature>
<feature type="transmembrane region" description="Helical; Name=3" evidence="2">
    <location>
        <begin position="167"/>
        <end position="188"/>
    </location>
</feature>
<feature type="topological domain" description="Cytoplasmic" evidence="2">
    <location>
        <begin position="189"/>
        <end position="205"/>
    </location>
</feature>
<feature type="transmembrane region" description="Helical; Name=4" evidence="2">
    <location>
        <begin position="206"/>
        <end position="229"/>
    </location>
</feature>
<feature type="topological domain" description="Extracellular" evidence="2">
    <location>
        <begin position="230"/>
        <end position="259"/>
    </location>
</feature>
<feature type="transmembrane region" description="Helical; Name=5" evidence="2">
    <location>
        <begin position="260"/>
        <end position="279"/>
    </location>
</feature>
<feature type="topological domain" description="Cytoplasmic" evidence="2">
    <location>
        <begin position="280"/>
        <end position="296"/>
    </location>
</feature>
<feature type="transmembrane region" description="Helical; Name=6" evidence="2">
    <location>
        <begin position="297"/>
        <end position="321"/>
    </location>
</feature>
<feature type="topological domain" description="Extracellular" evidence="2">
    <location>
        <begin position="322"/>
        <end position="335"/>
    </location>
</feature>
<feature type="transmembrane region" description="Helical; Name=7" evidence="2">
    <location>
        <begin position="336"/>
        <end position="360"/>
    </location>
</feature>
<feature type="topological domain" description="Cytoplasmic" evidence="2">
    <location>
        <begin position="361"/>
        <end position="377"/>
    </location>
</feature>
<feature type="site" description="Cleavage; by thrombin" evidence="1">
    <location>
        <begin position="38"/>
        <end position="39"/>
    </location>
</feature>
<feature type="glycosylation site" description="N-linked (GlcNAc...) asparagine" evidence="2">
    <location>
        <position position="82"/>
    </location>
</feature>
<feature type="disulfide bond" evidence="3">
    <location>
        <begin position="165"/>
        <end position="244"/>
    </location>
</feature>
<proteinExistence type="evidence at transcript level"/>
<reference key="1">
    <citation type="journal article" date="2005" name="BMC Genomics">
        <title>Characterization of 954 bovine full-CDS cDNA sequences.</title>
        <authorList>
            <person name="Harhay G.P."/>
            <person name="Sonstegard T.S."/>
            <person name="Keele J.W."/>
            <person name="Heaton M.P."/>
            <person name="Clawson M.L."/>
            <person name="Snelling W.M."/>
            <person name="Wiedmann R.T."/>
            <person name="Van Tassell C.P."/>
            <person name="Smith T.P.L."/>
        </authorList>
    </citation>
    <scope>NUCLEOTIDE SEQUENCE [LARGE SCALE MRNA]</scope>
</reference>
<organism>
    <name type="scientific">Bos taurus</name>
    <name type="common">Bovine</name>
    <dbReference type="NCBI Taxonomy" id="9913"/>
    <lineage>
        <taxon>Eukaryota</taxon>
        <taxon>Metazoa</taxon>
        <taxon>Chordata</taxon>
        <taxon>Craniata</taxon>
        <taxon>Vertebrata</taxon>
        <taxon>Euteleostomi</taxon>
        <taxon>Mammalia</taxon>
        <taxon>Eutheria</taxon>
        <taxon>Laurasiatheria</taxon>
        <taxon>Artiodactyla</taxon>
        <taxon>Ruminantia</taxon>
        <taxon>Pecora</taxon>
        <taxon>Bovidae</taxon>
        <taxon>Bovinae</taxon>
        <taxon>Bos</taxon>
    </lineage>
</organism>
<comment type="function">
    <text evidence="1">Receptor for activated thrombin coupled to G proteins that stimulate phosphoinositide hydrolysis.</text>
</comment>
<comment type="subunit">
    <text evidence="1">Interacts with INSC/inscuteable and GPSM2.</text>
</comment>
<comment type="subcellular location">
    <subcellularLocation>
        <location>Cell membrane</location>
        <topology>Multi-pass membrane protein</topology>
    </subcellularLocation>
</comment>
<comment type="PTM">
    <text evidence="1">A proteolytic cleavage generates a new N-terminus that functions as a tethered ligand.</text>
</comment>
<comment type="similarity">
    <text evidence="3">Belongs to the G-protein coupled receptor 1 family.</text>
</comment>
<name>PAR3_BOVIN</name>
<dbReference type="EMBL" id="BT021712">
    <property type="protein sequence ID" value="AAX46559.1"/>
    <property type="molecule type" value="mRNA"/>
</dbReference>
<dbReference type="SMR" id="Q58D85"/>
<dbReference type="FunCoup" id="Q58D85">
    <property type="interactions" value="179"/>
</dbReference>
<dbReference type="STRING" id="9913.ENSBTAP00000001191"/>
<dbReference type="GlyCosmos" id="Q58D85">
    <property type="glycosylation" value="1 site, No reported glycans"/>
</dbReference>
<dbReference type="GlyGen" id="Q58D85">
    <property type="glycosylation" value="1 site"/>
</dbReference>
<dbReference type="PaxDb" id="9913-ENSBTAP00000001191"/>
<dbReference type="eggNOG" id="ENOG502QWI1">
    <property type="taxonomic scope" value="Eukaryota"/>
</dbReference>
<dbReference type="InParanoid" id="Q58D85"/>
<dbReference type="OrthoDB" id="8859266at2759"/>
<dbReference type="Proteomes" id="UP000009136">
    <property type="component" value="Unplaced"/>
</dbReference>
<dbReference type="GO" id="GO:0005886">
    <property type="term" value="C:plasma membrane"/>
    <property type="evidence" value="ECO:0000318"/>
    <property type="project" value="GO_Central"/>
</dbReference>
<dbReference type="GO" id="GO:0004930">
    <property type="term" value="F:G protein-coupled receptor activity"/>
    <property type="evidence" value="ECO:0000318"/>
    <property type="project" value="GO_Central"/>
</dbReference>
<dbReference type="GO" id="GO:0015057">
    <property type="term" value="F:thrombin-activated receptor activity"/>
    <property type="evidence" value="ECO:0007669"/>
    <property type="project" value="InterPro"/>
</dbReference>
<dbReference type="GO" id="GO:0007596">
    <property type="term" value="P:blood coagulation"/>
    <property type="evidence" value="ECO:0007669"/>
    <property type="project" value="UniProtKB-KW"/>
</dbReference>
<dbReference type="GO" id="GO:0007186">
    <property type="term" value="P:G protein-coupled receptor signaling pathway"/>
    <property type="evidence" value="ECO:0000318"/>
    <property type="project" value="GO_Central"/>
</dbReference>
<dbReference type="CDD" id="cd15371">
    <property type="entry name" value="7tmA_PAR3"/>
    <property type="match status" value="1"/>
</dbReference>
<dbReference type="FunFam" id="1.20.1070.10:FF:000040">
    <property type="entry name" value="Coagulation factor 2 (thrombin) receptor"/>
    <property type="match status" value="1"/>
</dbReference>
<dbReference type="Gene3D" id="1.20.1070.10">
    <property type="entry name" value="Rhodopsin 7-helix transmembrane proteins"/>
    <property type="match status" value="1"/>
</dbReference>
<dbReference type="InterPro" id="IPR000276">
    <property type="entry name" value="GPCR_Rhodpsn"/>
</dbReference>
<dbReference type="InterPro" id="IPR017452">
    <property type="entry name" value="GPCR_Rhodpsn_7TM"/>
</dbReference>
<dbReference type="InterPro" id="IPR003943">
    <property type="entry name" value="Prot_act_rcpt_3"/>
</dbReference>
<dbReference type="InterPro" id="IPR003912">
    <property type="entry name" value="Protea_act_rcpt"/>
</dbReference>
<dbReference type="PANTHER" id="PTHR24232">
    <property type="entry name" value="G-PROTEIN COUPLED RECEPTOR"/>
    <property type="match status" value="1"/>
</dbReference>
<dbReference type="PANTHER" id="PTHR24232:SF0">
    <property type="entry name" value="PROTEINASE-ACTIVATED RECEPTOR 3"/>
    <property type="match status" value="1"/>
</dbReference>
<dbReference type="Pfam" id="PF00001">
    <property type="entry name" value="7tm_1"/>
    <property type="match status" value="1"/>
</dbReference>
<dbReference type="PRINTS" id="PR00237">
    <property type="entry name" value="GPCRRHODOPSN"/>
</dbReference>
<dbReference type="PRINTS" id="PR01428">
    <property type="entry name" value="PROTEASEAR"/>
</dbReference>
<dbReference type="PRINTS" id="PR01429">
    <property type="entry name" value="PROTEASEAR3"/>
</dbReference>
<dbReference type="SUPFAM" id="SSF81321">
    <property type="entry name" value="Family A G protein-coupled receptor-like"/>
    <property type="match status" value="1"/>
</dbReference>
<dbReference type="PROSITE" id="PS00237">
    <property type="entry name" value="G_PROTEIN_RECEP_F1_1"/>
    <property type="match status" value="1"/>
</dbReference>
<dbReference type="PROSITE" id="PS50262">
    <property type="entry name" value="G_PROTEIN_RECEP_F1_2"/>
    <property type="match status" value="1"/>
</dbReference>
<sequence length="377" mass="43009">MRAAIFAAIGALLLSPASCQSGMEYDADNLAKPTLSIKTFRGAPQNSFEEFPLSAIEGWTGTTKTVKIKCPEELDSNLHVNNATMGYLSSPLSTKLIPAIYILVFAVGMPANAVTLWMLFRTRTIRMTIFYTNLAIADFLFCVTLPFRIAYHLNGNNWVFGEVMCRATTVIFYGNMYCSILLLACISINRYLAIVHPFTYRGLPKRTYALLTCGLVWTTVFLYMLPFFILKQEYYLVQQDITTCHDVHNTCESSSPFQLYYFISLAFFGFLIPFLVIIYCYTAIIWTLNAKDRRWLWYIKASLLTFVIFTICFAPSNIILIIHHANYYYSNTDALYFVYLIALCLGSLNSCLDPFLYFLMSKITDHSTAYLTMVKLS</sequence>
<protein>
    <recommendedName>
        <fullName>Proteinase-activated receptor 3</fullName>
        <shortName>PAR-3</shortName>
    </recommendedName>
    <alternativeName>
        <fullName>Coagulation factor II receptor-like 2</fullName>
    </alternativeName>
    <alternativeName>
        <fullName>Thrombin receptor-like 2</fullName>
    </alternativeName>
</protein>
<keyword id="KW-0094">Blood coagulation</keyword>
<keyword id="KW-1003">Cell membrane</keyword>
<keyword id="KW-1015">Disulfide bond</keyword>
<keyword id="KW-0297">G-protein coupled receptor</keyword>
<keyword id="KW-0325">Glycoprotein</keyword>
<keyword id="KW-0356">Hemostasis</keyword>
<keyword id="KW-0472">Membrane</keyword>
<keyword id="KW-0675">Receptor</keyword>
<keyword id="KW-1185">Reference proteome</keyword>
<keyword id="KW-0732">Signal</keyword>
<keyword id="KW-0807">Transducer</keyword>
<keyword id="KW-0812">Transmembrane</keyword>
<keyword id="KW-1133">Transmembrane helix</keyword>
<gene>
    <name type="primary">F2RL2</name>
    <name type="synonym">PAR3</name>
</gene>
<accession>Q58D85</accession>
<evidence type="ECO:0000250" key="1"/>
<evidence type="ECO:0000255" key="2"/>
<evidence type="ECO:0000255" key="3">
    <source>
        <dbReference type="PROSITE-ProRule" id="PRU00521"/>
    </source>
</evidence>